<name>YUSR_BACSU</name>
<accession>O32184</accession>
<keyword id="KW-1185">Reference proteome</keyword>
<sequence>MKGMFFCARAVVPFMKKSKDGAIVNVGSIAGITGAGSSMPYAVSKSAVHGLTKSLAHALAPEIRVSGVAPGAVATRWWAGREEKMKSMIGSLLLQCIAEPDDVAKLICSLIEQESLTGQIITIDSGQTL</sequence>
<reference key="1">
    <citation type="journal article" date="1997" name="Nature">
        <title>The complete genome sequence of the Gram-positive bacterium Bacillus subtilis.</title>
        <authorList>
            <person name="Kunst F."/>
            <person name="Ogasawara N."/>
            <person name="Moszer I."/>
            <person name="Albertini A.M."/>
            <person name="Alloni G."/>
            <person name="Azevedo V."/>
            <person name="Bertero M.G."/>
            <person name="Bessieres P."/>
            <person name="Bolotin A."/>
            <person name="Borchert S."/>
            <person name="Borriss R."/>
            <person name="Boursier L."/>
            <person name="Brans A."/>
            <person name="Braun M."/>
            <person name="Brignell S.C."/>
            <person name="Bron S."/>
            <person name="Brouillet S."/>
            <person name="Bruschi C.V."/>
            <person name="Caldwell B."/>
            <person name="Capuano V."/>
            <person name="Carter N.M."/>
            <person name="Choi S.-K."/>
            <person name="Codani J.-J."/>
            <person name="Connerton I.F."/>
            <person name="Cummings N.J."/>
            <person name="Daniel R.A."/>
            <person name="Denizot F."/>
            <person name="Devine K.M."/>
            <person name="Duesterhoeft A."/>
            <person name="Ehrlich S.D."/>
            <person name="Emmerson P.T."/>
            <person name="Entian K.-D."/>
            <person name="Errington J."/>
            <person name="Fabret C."/>
            <person name="Ferrari E."/>
            <person name="Foulger D."/>
            <person name="Fritz C."/>
            <person name="Fujita M."/>
            <person name="Fujita Y."/>
            <person name="Fuma S."/>
            <person name="Galizzi A."/>
            <person name="Galleron N."/>
            <person name="Ghim S.-Y."/>
            <person name="Glaser P."/>
            <person name="Goffeau A."/>
            <person name="Golightly E.J."/>
            <person name="Grandi G."/>
            <person name="Guiseppi G."/>
            <person name="Guy B.J."/>
            <person name="Haga K."/>
            <person name="Haiech J."/>
            <person name="Harwood C.R."/>
            <person name="Henaut A."/>
            <person name="Hilbert H."/>
            <person name="Holsappel S."/>
            <person name="Hosono S."/>
            <person name="Hullo M.-F."/>
            <person name="Itaya M."/>
            <person name="Jones L.-M."/>
            <person name="Joris B."/>
            <person name="Karamata D."/>
            <person name="Kasahara Y."/>
            <person name="Klaerr-Blanchard M."/>
            <person name="Klein C."/>
            <person name="Kobayashi Y."/>
            <person name="Koetter P."/>
            <person name="Koningstein G."/>
            <person name="Krogh S."/>
            <person name="Kumano M."/>
            <person name="Kurita K."/>
            <person name="Lapidus A."/>
            <person name="Lardinois S."/>
            <person name="Lauber J."/>
            <person name="Lazarevic V."/>
            <person name="Lee S.-M."/>
            <person name="Levine A."/>
            <person name="Liu H."/>
            <person name="Masuda S."/>
            <person name="Mauel C."/>
            <person name="Medigue C."/>
            <person name="Medina N."/>
            <person name="Mellado R.P."/>
            <person name="Mizuno M."/>
            <person name="Moestl D."/>
            <person name="Nakai S."/>
            <person name="Noback M."/>
            <person name="Noone D."/>
            <person name="O'Reilly M."/>
            <person name="Ogawa K."/>
            <person name="Ogiwara A."/>
            <person name="Oudega B."/>
            <person name="Park S.-H."/>
            <person name="Parro V."/>
            <person name="Pohl T.M."/>
            <person name="Portetelle D."/>
            <person name="Porwollik S."/>
            <person name="Prescott A.M."/>
            <person name="Presecan E."/>
            <person name="Pujic P."/>
            <person name="Purnelle B."/>
            <person name="Rapoport G."/>
            <person name="Rey M."/>
            <person name="Reynolds S."/>
            <person name="Rieger M."/>
            <person name="Rivolta C."/>
            <person name="Rocha E."/>
            <person name="Roche B."/>
            <person name="Rose M."/>
            <person name="Sadaie Y."/>
            <person name="Sato T."/>
            <person name="Scanlan E."/>
            <person name="Schleich S."/>
            <person name="Schroeter R."/>
            <person name="Scoffone F."/>
            <person name="Sekiguchi J."/>
            <person name="Sekowska A."/>
            <person name="Seror S.J."/>
            <person name="Serror P."/>
            <person name="Shin B.-S."/>
            <person name="Soldo B."/>
            <person name="Sorokin A."/>
            <person name="Tacconi E."/>
            <person name="Takagi T."/>
            <person name="Takahashi H."/>
            <person name="Takemaru K."/>
            <person name="Takeuchi M."/>
            <person name="Tamakoshi A."/>
            <person name="Tanaka T."/>
            <person name="Terpstra P."/>
            <person name="Tognoni A."/>
            <person name="Tosato V."/>
            <person name="Uchiyama S."/>
            <person name="Vandenbol M."/>
            <person name="Vannier F."/>
            <person name="Vassarotti A."/>
            <person name="Viari A."/>
            <person name="Wambutt R."/>
            <person name="Wedler E."/>
            <person name="Wedler H."/>
            <person name="Weitzenegger T."/>
            <person name="Winters P."/>
            <person name="Wipat A."/>
            <person name="Yamamoto H."/>
            <person name="Yamane K."/>
            <person name="Yasumoto K."/>
            <person name="Yata K."/>
            <person name="Yoshida K."/>
            <person name="Yoshikawa H.-F."/>
            <person name="Zumstein E."/>
            <person name="Yoshikawa H."/>
            <person name="Danchin A."/>
        </authorList>
    </citation>
    <scope>NUCLEOTIDE SEQUENCE [LARGE SCALE GENOMIC DNA]</scope>
    <source>
        <strain>168</strain>
    </source>
</reference>
<feature type="chain" id="PRO_0000377001" description="Short-chain dehydrogenase/reductase homolog YusR">
    <location>
        <begin position="1"/>
        <end position="129"/>
    </location>
</feature>
<organism>
    <name type="scientific">Bacillus subtilis (strain 168)</name>
    <dbReference type="NCBI Taxonomy" id="224308"/>
    <lineage>
        <taxon>Bacteria</taxon>
        <taxon>Bacillati</taxon>
        <taxon>Bacillota</taxon>
        <taxon>Bacilli</taxon>
        <taxon>Bacillales</taxon>
        <taxon>Bacillaceae</taxon>
        <taxon>Bacillus</taxon>
    </lineage>
</organism>
<evidence type="ECO:0000305" key="1"/>
<comment type="similarity">
    <text evidence="1">Belongs to the short-chain dehydrogenases/reductases (SDR) family.</text>
</comment>
<comment type="caution">
    <text evidence="1">Could be the product of a pseudogene. This sequence is shorter than orthologs and lacks the NAD(P)-binding motif.</text>
</comment>
<gene>
    <name type="primary">yusR</name>
    <name type="ordered locus">BSU32900</name>
</gene>
<proteinExistence type="uncertain"/>
<protein>
    <recommendedName>
        <fullName>Short-chain dehydrogenase/reductase homolog YusR</fullName>
    </recommendedName>
</protein>
<dbReference type="EMBL" id="AL009126">
    <property type="protein sequence ID" value="CAB15279.1"/>
    <property type="molecule type" value="Genomic_DNA"/>
</dbReference>
<dbReference type="PIR" id="C70022">
    <property type="entry name" value="C70022"/>
</dbReference>
<dbReference type="RefSeq" id="NP_391169.1">
    <property type="nucleotide sequence ID" value="NC_000964.3"/>
</dbReference>
<dbReference type="RefSeq" id="WP_003228556.1">
    <property type="nucleotide sequence ID" value="NC_000964.3"/>
</dbReference>
<dbReference type="SMR" id="O32184"/>
<dbReference type="FunCoup" id="O32184">
    <property type="interactions" value="25"/>
</dbReference>
<dbReference type="STRING" id="224308.BSU32900"/>
<dbReference type="PaxDb" id="224308-BSU32900"/>
<dbReference type="EnsemblBacteria" id="CAB15279">
    <property type="protein sequence ID" value="CAB15279"/>
    <property type="gene ID" value="BSU_32900"/>
</dbReference>
<dbReference type="GeneID" id="937076"/>
<dbReference type="KEGG" id="bsu:BSU32900"/>
<dbReference type="PATRIC" id="fig|224308.179.peg.3566"/>
<dbReference type="eggNOG" id="COG1028">
    <property type="taxonomic scope" value="Bacteria"/>
</dbReference>
<dbReference type="InParanoid" id="O32184"/>
<dbReference type="OrthoDB" id="9790146at2"/>
<dbReference type="PhylomeDB" id="O32184"/>
<dbReference type="BioCyc" id="BSUB:BSU32900-MONOMER"/>
<dbReference type="Proteomes" id="UP000001570">
    <property type="component" value="Chromosome"/>
</dbReference>
<dbReference type="GO" id="GO:0016616">
    <property type="term" value="F:oxidoreductase activity, acting on the CH-OH group of donors, NAD or NADP as acceptor"/>
    <property type="evidence" value="ECO:0000318"/>
    <property type="project" value="GO_Central"/>
</dbReference>
<dbReference type="GO" id="GO:0030497">
    <property type="term" value="P:fatty acid elongation"/>
    <property type="evidence" value="ECO:0000318"/>
    <property type="project" value="GO_Central"/>
</dbReference>
<dbReference type="CDD" id="cd05233">
    <property type="entry name" value="SDR_c"/>
    <property type="match status" value="1"/>
</dbReference>
<dbReference type="Gene3D" id="3.40.50.720">
    <property type="entry name" value="NAD(P)-binding Rossmann-like Domain"/>
    <property type="match status" value="1"/>
</dbReference>
<dbReference type="InterPro" id="IPR036291">
    <property type="entry name" value="NAD(P)-bd_dom_sf"/>
</dbReference>
<dbReference type="InterPro" id="IPR020904">
    <property type="entry name" value="Sc_DH/Rdtase_CS"/>
</dbReference>
<dbReference type="InterPro" id="IPR002347">
    <property type="entry name" value="SDR_fam"/>
</dbReference>
<dbReference type="PANTHER" id="PTHR42760:SF40">
    <property type="entry name" value="3-OXOACYL-[ACYL-CARRIER-PROTEIN] REDUCTASE, CHLOROPLASTIC"/>
    <property type="match status" value="1"/>
</dbReference>
<dbReference type="PANTHER" id="PTHR42760">
    <property type="entry name" value="SHORT-CHAIN DEHYDROGENASES/REDUCTASES FAMILY MEMBER"/>
    <property type="match status" value="1"/>
</dbReference>
<dbReference type="Pfam" id="PF13561">
    <property type="entry name" value="adh_short_C2"/>
    <property type="match status" value="1"/>
</dbReference>
<dbReference type="PRINTS" id="PR00081">
    <property type="entry name" value="GDHRDH"/>
</dbReference>
<dbReference type="PRINTS" id="PR00080">
    <property type="entry name" value="SDRFAMILY"/>
</dbReference>
<dbReference type="SUPFAM" id="SSF51735">
    <property type="entry name" value="NAD(P)-binding Rossmann-fold domains"/>
    <property type="match status" value="1"/>
</dbReference>
<dbReference type="PROSITE" id="PS00061">
    <property type="entry name" value="ADH_SHORT"/>
    <property type="match status" value="1"/>
</dbReference>